<comment type="function">
    <text evidence="1">DNA-dependent RNA polymerase catalyzes the transcription of DNA into RNA using the four ribonucleoside triphosphates as substrates.</text>
</comment>
<comment type="catalytic activity">
    <reaction evidence="1">
        <text>RNA(n) + a ribonucleoside 5'-triphosphate = RNA(n+1) + diphosphate</text>
        <dbReference type="Rhea" id="RHEA:21248"/>
        <dbReference type="Rhea" id="RHEA-COMP:14527"/>
        <dbReference type="Rhea" id="RHEA-COMP:17342"/>
        <dbReference type="ChEBI" id="CHEBI:33019"/>
        <dbReference type="ChEBI" id="CHEBI:61557"/>
        <dbReference type="ChEBI" id="CHEBI:140395"/>
        <dbReference type="EC" id="2.7.7.6"/>
    </reaction>
</comment>
<comment type="cofactor">
    <cofactor evidence="1">
        <name>Mg(2+)</name>
        <dbReference type="ChEBI" id="CHEBI:18420"/>
    </cofactor>
    <text evidence="1">Binds 1 Mg(2+) ion per subunit.</text>
</comment>
<comment type="cofactor">
    <cofactor evidence="1">
        <name>Zn(2+)</name>
        <dbReference type="ChEBI" id="CHEBI:29105"/>
    </cofactor>
    <text evidence="1">Binds 2 Zn(2+) ions per subunit.</text>
</comment>
<comment type="subunit">
    <text evidence="1">The RNAP catalytic core consists of 2 alpha, 1 beta, 1 beta' and 1 omega subunit. When a sigma factor is associated with the core the holoenzyme is formed, which can initiate transcription.</text>
</comment>
<comment type="similarity">
    <text evidence="1">Belongs to the RNA polymerase beta' chain family.</text>
</comment>
<organism>
    <name type="scientific">Rhodopseudomonas palustris (strain TIE-1)</name>
    <dbReference type="NCBI Taxonomy" id="395960"/>
    <lineage>
        <taxon>Bacteria</taxon>
        <taxon>Pseudomonadati</taxon>
        <taxon>Pseudomonadota</taxon>
        <taxon>Alphaproteobacteria</taxon>
        <taxon>Hyphomicrobiales</taxon>
        <taxon>Nitrobacteraceae</taxon>
        <taxon>Rhodopseudomonas</taxon>
    </lineage>
</organism>
<sequence length="1400" mass="155884">MNQEIMNLFNPTTPAQVFDQIRISIASPEKILSWSYGEIKKPETINYRTFKPERDGLFCARIFGPIKDYECLCGKYKRMKYKGIICEKCSVEVTLSRVRRERMGHIELAAPVAHIWFLKSLPSRIGQLLDMTLKDLERILYFEYYVVLEPGLTDLKERQLLSEEEYLRAQDQYGQDSFTAMIGAEAIRELLKGLELEKIDAQLRAEMAETDSDIKHKKLAKRLKIVEAFRYSGNKPEWMILTVVPVIPPDLRPLVPLDGGRFATSDLNDLYRRVINRNNRLKRLMELRAPDIIIRNEKRMLQEAVDALFDNGRRGRVITGANKRPLKSLADMLKGKQGRFRQNLLGKRVDYSGRSVIVVGPELKLHQCGLPKKMALELFKPFIYSRLDAKGLSTTVKQAKKLVEKERPEVWDILDEVIREHPVLLNRAPTLHRLGIQAFEPVLIEGKAIQLHPLVCSAFNADFDGDQMAVHVPLSLEAQLEARVLMMSTNNILHPANGQPIIVPSQDIVLGLYYLSIMREGLPGEGKVFADLAELEHALYSKVIHLHTKIKYRWHWVNEEGENTVRLLETTAGRILLGQVLPKSPKLPFDVINKLMTKREISGVIDQVYRHCGQKETVIFCDRIMALGFFNAFKAGISFGKDDMVVPGSKWKIVDSTRTLAKDFEQQYNDGLITHGEKYNKVVDAWSKATEEIAKEMMKEISAVRKAPDGSEQQVNSIYMMAHSGARGSPAQMRQLAGMRGLMAKPSGEIIETPIISNFKEGLSVLEYFNSTHGARKGLADTALKTANSGYLTRRLVDVAQDCIITQADCGTSLGIKMRAIVDAGTVVASLGSRILGRTAGEDVRDPATNEIIVKRGDLMEERDVEAIHQAGVQEVKIRSALTCELVNGICGKCYGRDLARGTPVNHGEAVGVIAAQSIGEPGTQLTMRTFHIGGAAQINEQSVIESNFDGKIVIKNRAIARNGEGHNVAMVRNMVIAIVDPDGTERATHRIQYGARVHVDEGDMVKRGQRIAEWDPYTRPILTEVEGTIDFEDLIEDQSISETLDESTGIAKRIVIDWRSTRGGADLRPAIVIKGKDGKVLKLARGGDARYMLSVDAILSVDVGAQVKPGDILARISTESAKTRDITGGLPRVAELFEARRPKDAAIIAEIAGTIRFGRDYKNKRRLSIEPLDKNEEAREYLIPKGKHIHLQDGDVVEKGDFIVEGNPAPHDILAIKGIEELAAYLVNEIQEVYRLQGVLINDKHIEVIVRQMLQKIEITDQGDTDMISGEQVDKIEFNALNAKAVEEGKKPATGNPVLLGITKASLQTRSFFSAASFQETTRVLTEAAVNGKVDPLEGLKENVIVGRLIPAGTGASMAKIREVAVKRDRLILDEREKQAAIVPAAAPEAEPLSLPPAE</sequence>
<evidence type="ECO:0000255" key="1">
    <source>
        <dbReference type="HAMAP-Rule" id="MF_01322"/>
    </source>
</evidence>
<protein>
    <recommendedName>
        <fullName evidence="1">DNA-directed RNA polymerase subunit beta'</fullName>
        <shortName evidence="1">RNAP subunit beta'</shortName>
        <ecNumber evidence="1">2.7.7.6</ecNumber>
    </recommendedName>
    <alternativeName>
        <fullName evidence="1">RNA polymerase subunit beta'</fullName>
    </alternativeName>
    <alternativeName>
        <fullName evidence="1">Transcriptase subunit beta'</fullName>
    </alternativeName>
</protein>
<dbReference type="EC" id="2.7.7.6" evidence="1"/>
<dbReference type="EMBL" id="CP001096">
    <property type="protein sequence ID" value="ACF02186.1"/>
    <property type="molecule type" value="Genomic_DNA"/>
</dbReference>
<dbReference type="RefSeq" id="WP_012496662.1">
    <property type="nucleotide sequence ID" value="NC_011004.1"/>
</dbReference>
<dbReference type="SMR" id="B3QBZ9"/>
<dbReference type="KEGG" id="rpt:Rpal_3686"/>
<dbReference type="HOGENOM" id="CLU_000524_3_1_5"/>
<dbReference type="OrthoDB" id="9815296at2"/>
<dbReference type="Proteomes" id="UP000001725">
    <property type="component" value="Chromosome"/>
</dbReference>
<dbReference type="GO" id="GO:0000428">
    <property type="term" value="C:DNA-directed RNA polymerase complex"/>
    <property type="evidence" value="ECO:0007669"/>
    <property type="project" value="UniProtKB-KW"/>
</dbReference>
<dbReference type="GO" id="GO:0003677">
    <property type="term" value="F:DNA binding"/>
    <property type="evidence" value="ECO:0007669"/>
    <property type="project" value="UniProtKB-UniRule"/>
</dbReference>
<dbReference type="GO" id="GO:0003899">
    <property type="term" value="F:DNA-directed RNA polymerase activity"/>
    <property type="evidence" value="ECO:0007669"/>
    <property type="project" value="UniProtKB-UniRule"/>
</dbReference>
<dbReference type="GO" id="GO:0000287">
    <property type="term" value="F:magnesium ion binding"/>
    <property type="evidence" value="ECO:0007669"/>
    <property type="project" value="UniProtKB-UniRule"/>
</dbReference>
<dbReference type="GO" id="GO:0008270">
    <property type="term" value="F:zinc ion binding"/>
    <property type="evidence" value="ECO:0007669"/>
    <property type="project" value="UniProtKB-UniRule"/>
</dbReference>
<dbReference type="GO" id="GO:0006351">
    <property type="term" value="P:DNA-templated transcription"/>
    <property type="evidence" value="ECO:0007669"/>
    <property type="project" value="UniProtKB-UniRule"/>
</dbReference>
<dbReference type="CDD" id="cd02655">
    <property type="entry name" value="RNAP_beta'_C"/>
    <property type="match status" value="1"/>
</dbReference>
<dbReference type="CDD" id="cd01609">
    <property type="entry name" value="RNAP_beta'_N"/>
    <property type="match status" value="1"/>
</dbReference>
<dbReference type="FunFam" id="1.10.132.30:FF:000003">
    <property type="entry name" value="DNA-directed RNA polymerase subunit beta"/>
    <property type="match status" value="1"/>
</dbReference>
<dbReference type="Gene3D" id="1.10.132.30">
    <property type="match status" value="1"/>
</dbReference>
<dbReference type="Gene3D" id="1.10.150.390">
    <property type="match status" value="1"/>
</dbReference>
<dbReference type="Gene3D" id="1.10.1790.20">
    <property type="match status" value="1"/>
</dbReference>
<dbReference type="Gene3D" id="1.10.40.90">
    <property type="match status" value="1"/>
</dbReference>
<dbReference type="Gene3D" id="2.40.40.20">
    <property type="match status" value="1"/>
</dbReference>
<dbReference type="Gene3D" id="2.40.50.100">
    <property type="match status" value="3"/>
</dbReference>
<dbReference type="Gene3D" id="4.10.860.120">
    <property type="entry name" value="RNA polymerase II, clamp domain"/>
    <property type="match status" value="1"/>
</dbReference>
<dbReference type="Gene3D" id="1.10.274.100">
    <property type="entry name" value="RNA polymerase Rpb1, domain 3"/>
    <property type="match status" value="1"/>
</dbReference>
<dbReference type="HAMAP" id="MF_01322">
    <property type="entry name" value="RNApol_bact_RpoC"/>
    <property type="match status" value="1"/>
</dbReference>
<dbReference type="InterPro" id="IPR045867">
    <property type="entry name" value="DNA-dir_RpoC_beta_prime"/>
</dbReference>
<dbReference type="InterPro" id="IPR012754">
    <property type="entry name" value="DNA-dir_RpoC_beta_prime_bact"/>
</dbReference>
<dbReference type="InterPro" id="IPR000722">
    <property type="entry name" value="RNA_pol_asu"/>
</dbReference>
<dbReference type="InterPro" id="IPR006592">
    <property type="entry name" value="RNA_pol_N"/>
</dbReference>
<dbReference type="InterPro" id="IPR007080">
    <property type="entry name" value="RNA_pol_Rpb1_1"/>
</dbReference>
<dbReference type="InterPro" id="IPR007066">
    <property type="entry name" value="RNA_pol_Rpb1_3"/>
</dbReference>
<dbReference type="InterPro" id="IPR042102">
    <property type="entry name" value="RNA_pol_Rpb1_3_sf"/>
</dbReference>
<dbReference type="InterPro" id="IPR007083">
    <property type="entry name" value="RNA_pol_Rpb1_4"/>
</dbReference>
<dbReference type="InterPro" id="IPR007081">
    <property type="entry name" value="RNA_pol_Rpb1_5"/>
</dbReference>
<dbReference type="InterPro" id="IPR044893">
    <property type="entry name" value="RNA_pol_Rpb1_clamp_domain"/>
</dbReference>
<dbReference type="InterPro" id="IPR038120">
    <property type="entry name" value="Rpb1_funnel_sf"/>
</dbReference>
<dbReference type="NCBIfam" id="TIGR02386">
    <property type="entry name" value="rpoC_TIGR"/>
    <property type="match status" value="1"/>
</dbReference>
<dbReference type="PANTHER" id="PTHR19376">
    <property type="entry name" value="DNA-DIRECTED RNA POLYMERASE"/>
    <property type="match status" value="1"/>
</dbReference>
<dbReference type="PANTHER" id="PTHR19376:SF54">
    <property type="entry name" value="DNA-DIRECTED RNA POLYMERASE SUBUNIT BETA"/>
    <property type="match status" value="1"/>
</dbReference>
<dbReference type="Pfam" id="PF04997">
    <property type="entry name" value="RNA_pol_Rpb1_1"/>
    <property type="match status" value="1"/>
</dbReference>
<dbReference type="Pfam" id="PF00623">
    <property type="entry name" value="RNA_pol_Rpb1_2"/>
    <property type="match status" value="2"/>
</dbReference>
<dbReference type="Pfam" id="PF04983">
    <property type="entry name" value="RNA_pol_Rpb1_3"/>
    <property type="match status" value="1"/>
</dbReference>
<dbReference type="Pfam" id="PF05000">
    <property type="entry name" value="RNA_pol_Rpb1_4"/>
    <property type="match status" value="1"/>
</dbReference>
<dbReference type="Pfam" id="PF04998">
    <property type="entry name" value="RNA_pol_Rpb1_5"/>
    <property type="match status" value="1"/>
</dbReference>
<dbReference type="SMART" id="SM00663">
    <property type="entry name" value="RPOLA_N"/>
    <property type="match status" value="1"/>
</dbReference>
<dbReference type="SUPFAM" id="SSF64484">
    <property type="entry name" value="beta and beta-prime subunits of DNA dependent RNA-polymerase"/>
    <property type="match status" value="1"/>
</dbReference>
<name>RPOC_RHOPT</name>
<gene>
    <name evidence="1" type="primary">rpoC</name>
    <name type="ordered locus">Rpal_3686</name>
</gene>
<keyword id="KW-0240">DNA-directed RNA polymerase</keyword>
<keyword id="KW-0460">Magnesium</keyword>
<keyword id="KW-0479">Metal-binding</keyword>
<keyword id="KW-0548">Nucleotidyltransferase</keyword>
<keyword id="KW-0804">Transcription</keyword>
<keyword id="KW-0808">Transferase</keyword>
<keyword id="KW-0862">Zinc</keyword>
<reference key="1">
    <citation type="submission" date="2008-05" db="EMBL/GenBank/DDBJ databases">
        <title>Complete sequence of Rhodopseudomonas palustris TIE-1.</title>
        <authorList>
            <consortium name="US DOE Joint Genome Institute"/>
            <person name="Lucas S."/>
            <person name="Copeland A."/>
            <person name="Lapidus A."/>
            <person name="Glavina del Rio T."/>
            <person name="Dalin E."/>
            <person name="Tice H."/>
            <person name="Pitluck S."/>
            <person name="Chain P."/>
            <person name="Malfatti S."/>
            <person name="Shin M."/>
            <person name="Vergez L."/>
            <person name="Lang D."/>
            <person name="Schmutz J."/>
            <person name="Larimer F."/>
            <person name="Land M."/>
            <person name="Hauser L."/>
            <person name="Kyrpides N."/>
            <person name="Mikhailova N."/>
            <person name="Emerson D."/>
            <person name="Newman D.K."/>
            <person name="Roden E."/>
            <person name="Richardson P."/>
        </authorList>
    </citation>
    <scope>NUCLEOTIDE SEQUENCE [LARGE SCALE GENOMIC DNA]</scope>
    <source>
        <strain>TIE-1</strain>
    </source>
</reference>
<proteinExistence type="inferred from homology"/>
<accession>B3QBZ9</accession>
<feature type="chain" id="PRO_1000141791" description="DNA-directed RNA polymerase subunit beta'">
    <location>
        <begin position="1"/>
        <end position="1400"/>
    </location>
</feature>
<feature type="binding site" evidence="1">
    <location>
        <position position="71"/>
    </location>
    <ligand>
        <name>Zn(2+)</name>
        <dbReference type="ChEBI" id="CHEBI:29105"/>
        <label>1</label>
    </ligand>
</feature>
<feature type="binding site" evidence="1">
    <location>
        <position position="73"/>
    </location>
    <ligand>
        <name>Zn(2+)</name>
        <dbReference type="ChEBI" id="CHEBI:29105"/>
        <label>1</label>
    </ligand>
</feature>
<feature type="binding site" evidence="1">
    <location>
        <position position="86"/>
    </location>
    <ligand>
        <name>Zn(2+)</name>
        <dbReference type="ChEBI" id="CHEBI:29105"/>
        <label>1</label>
    </ligand>
</feature>
<feature type="binding site" evidence="1">
    <location>
        <position position="89"/>
    </location>
    <ligand>
        <name>Zn(2+)</name>
        <dbReference type="ChEBI" id="CHEBI:29105"/>
        <label>1</label>
    </ligand>
</feature>
<feature type="binding site" evidence="1">
    <location>
        <position position="462"/>
    </location>
    <ligand>
        <name>Mg(2+)</name>
        <dbReference type="ChEBI" id="CHEBI:18420"/>
    </ligand>
</feature>
<feature type="binding site" evidence="1">
    <location>
        <position position="464"/>
    </location>
    <ligand>
        <name>Mg(2+)</name>
        <dbReference type="ChEBI" id="CHEBI:18420"/>
    </ligand>
</feature>
<feature type="binding site" evidence="1">
    <location>
        <position position="466"/>
    </location>
    <ligand>
        <name>Mg(2+)</name>
        <dbReference type="ChEBI" id="CHEBI:18420"/>
    </ligand>
</feature>
<feature type="binding site" evidence="1">
    <location>
        <position position="810"/>
    </location>
    <ligand>
        <name>Zn(2+)</name>
        <dbReference type="ChEBI" id="CHEBI:29105"/>
        <label>2</label>
    </ligand>
</feature>
<feature type="binding site" evidence="1">
    <location>
        <position position="884"/>
    </location>
    <ligand>
        <name>Zn(2+)</name>
        <dbReference type="ChEBI" id="CHEBI:29105"/>
        <label>2</label>
    </ligand>
</feature>
<feature type="binding site" evidence="1">
    <location>
        <position position="891"/>
    </location>
    <ligand>
        <name>Zn(2+)</name>
        <dbReference type="ChEBI" id="CHEBI:29105"/>
        <label>2</label>
    </ligand>
</feature>
<feature type="binding site" evidence="1">
    <location>
        <position position="894"/>
    </location>
    <ligand>
        <name>Zn(2+)</name>
        <dbReference type="ChEBI" id="CHEBI:29105"/>
        <label>2</label>
    </ligand>
</feature>